<sequence>MLNRPSSPDGGEAHAWPPDPEIPVFANAEHAHRRPLRWMFALVAVALSCLLATGIWRSRAAPPHAATQTVAPAGQALPPGRIFTVHPREPEPAPLPDMPAAPDPILPQPRPAPPVPPPPIRAPYDYDEPAPRRDSAALKSGPAMMVATAARLGQTERAGMADDGVSADAATLIGRNVSRATRSGGRDYRLLPGTFIDCILQTRIVTNVPGLTTCIVSRDVYSASGKRVLVPRGTTVVGEYRADLAQGSQRIYVAWSRLFMPSGLTIELASPAVDGTGAAGLPGVVDDKFAQRFGGALLLSVLGDATSYMLARATDARHGVNVNLTAAGTMNSLAASALNNTINIPPTLYKNHGDQIGILVARPLDFSILRGTNE</sequence>
<reference key="1">
    <citation type="journal article" date="1993" name="Proc. Natl. Acad. Sci. U.S.A.">
        <title>Molecular characterization of an operon required for pertussis toxin secretion.</title>
        <authorList>
            <person name="Weiss A.A."/>
            <person name="Johnson F.D."/>
            <person name="Burns D.L."/>
        </authorList>
    </citation>
    <scope>NUCLEOTIDE SEQUENCE [GENOMIC DNA]</scope>
    <scope>FUNCTION</scope>
    <source>
        <strain>Tohama I / BP338</strain>
    </source>
</reference>
<reference key="2">
    <citation type="journal article" date="2003" name="Nat. Genet.">
        <title>Comparative analysis of the genome sequences of Bordetella pertussis, Bordetella parapertussis and Bordetella bronchiseptica.</title>
        <authorList>
            <person name="Parkhill J."/>
            <person name="Sebaihia M."/>
            <person name="Preston A."/>
            <person name="Murphy L.D."/>
            <person name="Thomson N.R."/>
            <person name="Harris D.E."/>
            <person name="Holden M.T.G."/>
            <person name="Churcher C.M."/>
            <person name="Bentley S.D."/>
            <person name="Mungall K.L."/>
            <person name="Cerdeno-Tarraga A.-M."/>
            <person name="Temple L."/>
            <person name="James K.D."/>
            <person name="Harris B."/>
            <person name="Quail M.A."/>
            <person name="Achtman M."/>
            <person name="Atkin R."/>
            <person name="Baker S."/>
            <person name="Basham D."/>
            <person name="Bason N."/>
            <person name="Cherevach I."/>
            <person name="Chillingworth T."/>
            <person name="Collins M."/>
            <person name="Cronin A."/>
            <person name="Davis P."/>
            <person name="Doggett J."/>
            <person name="Feltwell T."/>
            <person name="Goble A."/>
            <person name="Hamlin N."/>
            <person name="Hauser H."/>
            <person name="Holroyd S."/>
            <person name="Jagels K."/>
            <person name="Leather S."/>
            <person name="Moule S."/>
            <person name="Norberczak H."/>
            <person name="O'Neil S."/>
            <person name="Ormond D."/>
            <person name="Price C."/>
            <person name="Rabbinowitsch E."/>
            <person name="Rutter S."/>
            <person name="Sanders M."/>
            <person name="Saunders D."/>
            <person name="Seeger K."/>
            <person name="Sharp S."/>
            <person name="Simmonds M."/>
            <person name="Skelton J."/>
            <person name="Squares R."/>
            <person name="Squares S."/>
            <person name="Stevens K."/>
            <person name="Unwin L."/>
            <person name="Whitehead S."/>
            <person name="Barrell B.G."/>
            <person name="Maskell D.J."/>
        </authorList>
    </citation>
    <scope>NUCLEOTIDE SEQUENCE [LARGE SCALE GENOMIC DNA]</scope>
    <source>
        <strain>Tohama I / ATCC BAA-589 / NCTC 13251</strain>
    </source>
</reference>
<reference key="3">
    <citation type="journal article" date="1994" name="J. Bacteriol.">
        <title>Detection and subcellular localization of three Ptl proteins involved in the secretion of pertussis toxin from Bordetella pertussis.</title>
        <authorList>
            <person name="Johnson F.D."/>
            <person name="Burns D.L."/>
        </authorList>
    </citation>
    <scope>SUBCELLULAR LOCATION</scope>
    <source>
        <strain>Tohama I / BP338</strain>
    </source>
</reference>
<reference key="4">
    <citation type="journal article" date="1995" name="J. Bacteriol.">
        <title>Synergistic binding of RNA polymerase and BvgA phosphate to the pertussis toxin promoter of Bordetella pertussis.</title>
        <authorList>
            <person name="Boucher P.E."/>
            <person name="Stibitz S."/>
        </authorList>
    </citation>
    <scope>REGULATION BY BVGS/BVGA</scope>
    <source>
        <strain>Tohama I / ATCC BAA-589 / NCTC 13251</strain>
    </source>
</reference>
<reference key="5">
    <citation type="journal article" date="1996" name="Infect. Immun.">
        <title>The pertussis toxin liberation genes of Bordetella pertussis are transcriptionally linked to the pertussis toxin operon.</title>
        <authorList>
            <person name="Ricci S."/>
            <person name="Rappuoli R."/>
            <person name="Scarlato V."/>
        </authorList>
    </citation>
    <scope>COTRANSCRIPTION WITH PTX</scope>
    <source>
        <strain>Wellcome 28</strain>
    </source>
</reference>
<reference key="6">
    <citation type="journal article" date="1999" name="FEMS Microbiol. Lett.">
        <title>Mutants in the ptlA-H genes of Bordetella pertussis are deficient for pertussis toxin secretion.</title>
        <authorList>
            <person name="Craig-Mylius K.A."/>
            <person name="Weiss A.A."/>
        </authorList>
    </citation>
    <scope>FUNCTION</scope>
    <source>
        <strain>Tohama I / BP338</strain>
    </source>
</reference>
<reference key="7">
    <citation type="journal article" date="2004" name="Infect. Immun.">
        <title>Analysis of subassemblies of pertussis toxin subunits in vivo and their interaction with the ptl transport apparatus.</title>
        <authorList>
            <person name="Burns D.L."/>
            <person name="Fiddner S."/>
            <person name="Cheung A.M."/>
            <person name="Verma A."/>
        </authorList>
    </citation>
    <scope>FUNCTION</scope>
    <source>
        <strain>Tohama I / BP338</strain>
    </source>
</reference>
<name>PTLG_BORPE</name>
<proteinExistence type="evidence at transcript level"/>
<gene>
    <name type="primary">ptlG</name>
    <name type="ordered locus">BP3795</name>
</gene>
<accession>Q7VSX4</accession>
<evidence type="ECO:0000255" key="1"/>
<evidence type="ECO:0000256" key="2">
    <source>
        <dbReference type="SAM" id="MobiDB-lite"/>
    </source>
</evidence>
<evidence type="ECO:0000269" key="3">
    <source>
    </source>
</evidence>
<evidence type="ECO:0000269" key="4">
    <source>
    </source>
</evidence>
<evidence type="ECO:0000269" key="5">
    <source>
    </source>
</evidence>
<evidence type="ECO:0000305" key="6"/>
<comment type="function">
    <text evidence="3 4 5">Component of the type IV secretion system ptl required for secretion of assembled pertussis toxin (PTX) through the outer membrane.</text>
</comment>
<comment type="subcellular location">
    <subcellularLocation>
        <location evidence="6">Cell membrane</location>
        <topology evidence="6">Single-pass membrane protein</topology>
    </subcellularLocation>
</comment>
<comment type="induction">
    <text>Cotranscribed with ptxABCDE. Activated by the two-component regulatory system BvgS/BvgA.</text>
</comment>
<comment type="similarity">
    <text evidence="6">Belongs to the TrbI/VirB10 family.</text>
</comment>
<keyword id="KW-1003">Cell membrane</keyword>
<keyword id="KW-0472">Membrane</keyword>
<keyword id="KW-1185">Reference proteome</keyword>
<keyword id="KW-0812">Transmembrane</keyword>
<keyword id="KW-1133">Transmembrane helix</keyword>
<keyword id="KW-0813">Transport</keyword>
<dbReference type="EMBL" id="L10720">
    <property type="status" value="NOT_ANNOTATED_CDS"/>
    <property type="molecule type" value="Genomic_DNA"/>
</dbReference>
<dbReference type="EMBL" id="BX640422">
    <property type="protein sequence ID" value="CAE44050.1"/>
    <property type="molecule type" value="Genomic_DNA"/>
</dbReference>
<dbReference type="RefSeq" id="NP_882294.1">
    <property type="nucleotide sequence ID" value="NC_002929.2"/>
</dbReference>
<dbReference type="RefSeq" id="WP_010931655.1">
    <property type="nucleotide sequence ID" value="NZ_CP039022.1"/>
</dbReference>
<dbReference type="SMR" id="Q7VSX4"/>
<dbReference type="STRING" id="257313.BP3795"/>
<dbReference type="PaxDb" id="257313-BP3795"/>
<dbReference type="GeneID" id="69599980"/>
<dbReference type="KEGG" id="bpe:BP3795"/>
<dbReference type="PATRIC" id="fig|257313.5.peg.4099"/>
<dbReference type="eggNOG" id="COG2948">
    <property type="taxonomic scope" value="Bacteria"/>
</dbReference>
<dbReference type="HOGENOM" id="CLU_041899_7_0_4"/>
<dbReference type="Proteomes" id="UP000002676">
    <property type="component" value="Chromosome"/>
</dbReference>
<dbReference type="GO" id="GO:0005886">
    <property type="term" value="C:plasma membrane"/>
    <property type="evidence" value="ECO:0007669"/>
    <property type="project" value="UniProtKB-SubCell"/>
</dbReference>
<dbReference type="CDD" id="cd16429">
    <property type="entry name" value="VirB10"/>
    <property type="match status" value="1"/>
</dbReference>
<dbReference type="Gene3D" id="2.40.128.260">
    <property type="entry name" value="Type IV secretion system, VirB10/TraB/TrbI"/>
    <property type="match status" value="1"/>
</dbReference>
<dbReference type="InterPro" id="IPR047695">
    <property type="entry name" value="T4SS_VirB10/PtlG"/>
</dbReference>
<dbReference type="InterPro" id="IPR005498">
    <property type="entry name" value="T4SS_VirB10/TraB/TrbI"/>
</dbReference>
<dbReference type="InterPro" id="IPR042217">
    <property type="entry name" value="T4SS_VirB10/TrbI"/>
</dbReference>
<dbReference type="NCBIfam" id="NF038091">
    <property type="entry name" value="T4SS_VirB10"/>
    <property type="match status" value="1"/>
</dbReference>
<dbReference type="Pfam" id="PF03743">
    <property type="entry name" value="TrbI"/>
    <property type="match status" value="1"/>
</dbReference>
<feature type="chain" id="PRO_0000262578" description="Type IV secretion system protein PtlG">
    <location>
        <begin position="1"/>
        <end position="374"/>
    </location>
</feature>
<feature type="transmembrane region" description="Helical" evidence="1">
    <location>
        <begin position="38"/>
        <end position="56"/>
    </location>
</feature>
<feature type="region of interest" description="Disordered" evidence="2">
    <location>
        <begin position="86"/>
        <end position="117"/>
    </location>
</feature>
<feature type="compositionally biased region" description="Pro residues" evidence="2">
    <location>
        <begin position="92"/>
        <end position="117"/>
    </location>
</feature>
<protein>
    <recommendedName>
        <fullName>Type IV secretion system protein PtlG</fullName>
    </recommendedName>
    <alternativeName>
        <fullName>Pertussis toxin liberation protein G</fullName>
    </alternativeName>
</protein>
<organism>
    <name type="scientific">Bordetella pertussis (strain Tohama I / ATCC BAA-589 / NCTC 13251)</name>
    <dbReference type="NCBI Taxonomy" id="257313"/>
    <lineage>
        <taxon>Bacteria</taxon>
        <taxon>Pseudomonadati</taxon>
        <taxon>Pseudomonadota</taxon>
        <taxon>Betaproteobacteria</taxon>
        <taxon>Burkholderiales</taxon>
        <taxon>Alcaligenaceae</taxon>
        <taxon>Bordetella</taxon>
    </lineage>
</organism>